<reference key="1">
    <citation type="submission" date="2007-06" db="EMBL/GenBank/DDBJ databases">
        <authorList>
            <person name="Dodson R.J."/>
            <person name="Harkins D."/>
            <person name="Paulsen I.T."/>
        </authorList>
    </citation>
    <scope>NUCLEOTIDE SEQUENCE [LARGE SCALE GENOMIC DNA]</scope>
    <source>
        <strain>DSM 24068 / PA7</strain>
    </source>
</reference>
<evidence type="ECO:0000255" key="1">
    <source>
        <dbReference type="HAMAP-Rule" id="MF_00300"/>
    </source>
</evidence>
<comment type="function">
    <text evidence="1">Catalyzes the anti-1,4-elimination of the C-3 phosphate and the C-6 proR hydrogen from 5-enolpyruvylshikimate-3-phosphate (EPSP) to yield chorismate, which is the branch point compound that serves as the starting substrate for the three terminal pathways of aromatic amino acid biosynthesis. This reaction introduces a second double bond into the aromatic ring system.</text>
</comment>
<comment type="catalytic activity">
    <reaction evidence="1">
        <text>5-O-(1-carboxyvinyl)-3-phosphoshikimate = chorismate + phosphate</text>
        <dbReference type="Rhea" id="RHEA:21020"/>
        <dbReference type="ChEBI" id="CHEBI:29748"/>
        <dbReference type="ChEBI" id="CHEBI:43474"/>
        <dbReference type="ChEBI" id="CHEBI:57701"/>
        <dbReference type="EC" id="4.2.3.5"/>
    </reaction>
</comment>
<comment type="cofactor">
    <cofactor evidence="1">
        <name>FMNH2</name>
        <dbReference type="ChEBI" id="CHEBI:57618"/>
    </cofactor>
    <text evidence="1">Reduced FMN (FMNH(2)).</text>
</comment>
<comment type="pathway">
    <text evidence="1">Metabolic intermediate biosynthesis; chorismate biosynthesis; chorismate from D-erythrose 4-phosphate and phosphoenolpyruvate: step 7/7.</text>
</comment>
<comment type="subunit">
    <text evidence="1">Homotetramer.</text>
</comment>
<comment type="similarity">
    <text evidence="1">Belongs to the chorismate synthase family.</text>
</comment>
<dbReference type="EC" id="4.2.3.5" evidence="1"/>
<dbReference type="EMBL" id="CP000744">
    <property type="protein sequence ID" value="ABR83436.1"/>
    <property type="molecule type" value="Genomic_DNA"/>
</dbReference>
<dbReference type="RefSeq" id="WP_012076230.1">
    <property type="nucleotide sequence ID" value="NC_009656.1"/>
</dbReference>
<dbReference type="SMR" id="A6V7B0"/>
<dbReference type="KEGG" id="pap:PSPA7_3591"/>
<dbReference type="HOGENOM" id="CLU_034547_0_2_6"/>
<dbReference type="UniPathway" id="UPA00053">
    <property type="reaction ID" value="UER00090"/>
</dbReference>
<dbReference type="Proteomes" id="UP000001582">
    <property type="component" value="Chromosome"/>
</dbReference>
<dbReference type="GO" id="GO:0005829">
    <property type="term" value="C:cytosol"/>
    <property type="evidence" value="ECO:0007669"/>
    <property type="project" value="TreeGrafter"/>
</dbReference>
<dbReference type="GO" id="GO:0004107">
    <property type="term" value="F:chorismate synthase activity"/>
    <property type="evidence" value="ECO:0007669"/>
    <property type="project" value="UniProtKB-UniRule"/>
</dbReference>
<dbReference type="GO" id="GO:0010181">
    <property type="term" value="F:FMN binding"/>
    <property type="evidence" value="ECO:0007669"/>
    <property type="project" value="TreeGrafter"/>
</dbReference>
<dbReference type="GO" id="GO:0008652">
    <property type="term" value="P:amino acid biosynthetic process"/>
    <property type="evidence" value="ECO:0007669"/>
    <property type="project" value="UniProtKB-KW"/>
</dbReference>
<dbReference type="GO" id="GO:0009073">
    <property type="term" value="P:aromatic amino acid family biosynthetic process"/>
    <property type="evidence" value="ECO:0007669"/>
    <property type="project" value="UniProtKB-KW"/>
</dbReference>
<dbReference type="GO" id="GO:0009423">
    <property type="term" value="P:chorismate biosynthetic process"/>
    <property type="evidence" value="ECO:0007669"/>
    <property type="project" value="UniProtKB-UniRule"/>
</dbReference>
<dbReference type="CDD" id="cd07304">
    <property type="entry name" value="Chorismate_synthase"/>
    <property type="match status" value="1"/>
</dbReference>
<dbReference type="FunFam" id="3.60.150.10:FF:000001">
    <property type="entry name" value="Chorismate synthase"/>
    <property type="match status" value="1"/>
</dbReference>
<dbReference type="Gene3D" id="3.60.150.10">
    <property type="entry name" value="Chorismate synthase AroC"/>
    <property type="match status" value="1"/>
</dbReference>
<dbReference type="HAMAP" id="MF_00300">
    <property type="entry name" value="Chorismate_synth"/>
    <property type="match status" value="1"/>
</dbReference>
<dbReference type="InterPro" id="IPR000453">
    <property type="entry name" value="Chorismate_synth"/>
</dbReference>
<dbReference type="InterPro" id="IPR035904">
    <property type="entry name" value="Chorismate_synth_AroC_sf"/>
</dbReference>
<dbReference type="InterPro" id="IPR020541">
    <property type="entry name" value="Chorismate_synthase_CS"/>
</dbReference>
<dbReference type="NCBIfam" id="TIGR00033">
    <property type="entry name" value="aroC"/>
    <property type="match status" value="1"/>
</dbReference>
<dbReference type="NCBIfam" id="NF003793">
    <property type="entry name" value="PRK05382.1"/>
    <property type="match status" value="1"/>
</dbReference>
<dbReference type="PANTHER" id="PTHR21085">
    <property type="entry name" value="CHORISMATE SYNTHASE"/>
    <property type="match status" value="1"/>
</dbReference>
<dbReference type="PANTHER" id="PTHR21085:SF0">
    <property type="entry name" value="CHORISMATE SYNTHASE"/>
    <property type="match status" value="1"/>
</dbReference>
<dbReference type="Pfam" id="PF01264">
    <property type="entry name" value="Chorismate_synt"/>
    <property type="match status" value="1"/>
</dbReference>
<dbReference type="PIRSF" id="PIRSF001456">
    <property type="entry name" value="Chorismate_synth"/>
    <property type="match status" value="1"/>
</dbReference>
<dbReference type="SUPFAM" id="SSF103263">
    <property type="entry name" value="Chorismate synthase, AroC"/>
    <property type="match status" value="1"/>
</dbReference>
<dbReference type="PROSITE" id="PS00787">
    <property type="entry name" value="CHORISMATE_SYNTHASE_1"/>
    <property type="match status" value="1"/>
</dbReference>
<dbReference type="PROSITE" id="PS00788">
    <property type="entry name" value="CHORISMATE_SYNTHASE_2"/>
    <property type="match status" value="1"/>
</dbReference>
<dbReference type="PROSITE" id="PS00789">
    <property type="entry name" value="CHORISMATE_SYNTHASE_3"/>
    <property type="match status" value="1"/>
</dbReference>
<feature type="chain" id="PRO_1000022527" description="Chorismate synthase">
    <location>
        <begin position="1"/>
        <end position="363"/>
    </location>
</feature>
<feature type="binding site" evidence="1">
    <location>
        <position position="48"/>
    </location>
    <ligand>
        <name>NADP(+)</name>
        <dbReference type="ChEBI" id="CHEBI:58349"/>
    </ligand>
</feature>
<feature type="binding site" evidence="1">
    <location>
        <position position="54"/>
    </location>
    <ligand>
        <name>NADP(+)</name>
        <dbReference type="ChEBI" id="CHEBI:58349"/>
    </ligand>
</feature>
<feature type="binding site" evidence="1">
    <location>
        <begin position="125"/>
        <end position="127"/>
    </location>
    <ligand>
        <name>FMN</name>
        <dbReference type="ChEBI" id="CHEBI:58210"/>
    </ligand>
</feature>
<feature type="binding site" evidence="1">
    <location>
        <begin position="237"/>
        <end position="238"/>
    </location>
    <ligand>
        <name>FMN</name>
        <dbReference type="ChEBI" id="CHEBI:58210"/>
    </ligand>
</feature>
<feature type="binding site" evidence="1">
    <location>
        <position position="277"/>
    </location>
    <ligand>
        <name>FMN</name>
        <dbReference type="ChEBI" id="CHEBI:58210"/>
    </ligand>
</feature>
<feature type="binding site" evidence="1">
    <location>
        <begin position="292"/>
        <end position="296"/>
    </location>
    <ligand>
        <name>FMN</name>
        <dbReference type="ChEBI" id="CHEBI:58210"/>
    </ligand>
</feature>
<feature type="binding site" evidence="1">
    <location>
        <position position="318"/>
    </location>
    <ligand>
        <name>FMN</name>
        <dbReference type="ChEBI" id="CHEBI:58210"/>
    </ligand>
</feature>
<sequence length="363" mass="39043">MSGNTYGKLFTVTSAGESHGPALVAIVDGCPPGLELSAQDLQRDLDRRKPGTSRHTTQRQEADEVEILSGVFEGRTTGTPIGLLIRNTDQKSKDYSAIKDLFRPAHADYTYHHKYGVRDYRGGGRSSARETAMRVAAGAIAKKYLAGLGIRVRGYMSQLGPIEIPFKTWDSVERNAFFSPDPDKVPELEAYMDQLRRDQDSIGAKITVVAEGVPPGLGEPIFDRLDAELAHALMSINAVKGVEIGAGFASIAQRGTEHRDELTPQGFLSNNAGGILGGISSGQPIVAHLALKPTSSITTPGRSIDTAGEPVDMITKGRHDPCVGIRATPIAEAMMAIVLLDQLLRQRGQNADVRVDTPILPQL</sequence>
<proteinExistence type="inferred from homology"/>
<name>AROC_PSEP7</name>
<gene>
    <name evidence="1" type="primary">aroC</name>
    <name type="ordered locus">PSPA7_3591</name>
</gene>
<accession>A6V7B0</accession>
<organism>
    <name type="scientific">Pseudomonas paraeruginosa (strain DSM 24068 / PA7)</name>
    <name type="common">Pseudomonas aeruginosa (strain PA7)</name>
    <dbReference type="NCBI Taxonomy" id="381754"/>
    <lineage>
        <taxon>Bacteria</taxon>
        <taxon>Pseudomonadati</taxon>
        <taxon>Pseudomonadota</taxon>
        <taxon>Gammaproteobacteria</taxon>
        <taxon>Pseudomonadales</taxon>
        <taxon>Pseudomonadaceae</taxon>
        <taxon>Pseudomonas</taxon>
        <taxon>Pseudomonas paraeruginosa</taxon>
    </lineage>
</organism>
<keyword id="KW-0028">Amino-acid biosynthesis</keyword>
<keyword id="KW-0057">Aromatic amino acid biosynthesis</keyword>
<keyword id="KW-0274">FAD</keyword>
<keyword id="KW-0285">Flavoprotein</keyword>
<keyword id="KW-0288">FMN</keyword>
<keyword id="KW-0456">Lyase</keyword>
<keyword id="KW-0521">NADP</keyword>
<protein>
    <recommendedName>
        <fullName evidence="1">Chorismate synthase</fullName>
        <shortName evidence="1">CS</shortName>
        <ecNumber evidence="1">4.2.3.5</ecNumber>
    </recommendedName>
    <alternativeName>
        <fullName evidence="1">5-enolpyruvylshikimate-3-phosphate phospholyase</fullName>
    </alternativeName>
</protein>